<comment type="function">
    <text evidence="1">Sigma factors are initiation factors that promote the attachment of RNA polymerase to specific initiation sites and are then released. This sigma factor controls the expression of flagella-related genes.</text>
</comment>
<comment type="subcellular location">
    <subcellularLocation>
        <location evidence="1">Cytoplasm</location>
    </subcellularLocation>
</comment>
<comment type="similarity">
    <text evidence="1">Belongs to the sigma-70 factor family. FliA subfamily.</text>
</comment>
<accession>P0AEM8</accession>
<accession>P31804</accession>
<protein>
    <recommendedName>
        <fullName evidence="1">RNA polymerase sigma factor FliA</fullName>
    </recommendedName>
    <alternativeName>
        <fullName evidence="1">RNA polymerase sigma factor for flagellar operon</fullName>
    </alternativeName>
    <alternativeName>
        <fullName evidence="1">Sigma F</fullName>
    </alternativeName>
    <alternativeName>
        <fullName evidence="1">Sigma-28</fullName>
    </alternativeName>
</protein>
<dbReference type="EMBL" id="AE005174">
    <property type="protein sequence ID" value="AAG56937.1"/>
    <property type="molecule type" value="Genomic_DNA"/>
</dbReference>
<dbReference type="EMBL" id="BA000007">
    <property type="protein sequence ID" value="BAB36084.1"/>
    <property type="molecule type" value="Genomic_DNA"/>
</dbReference>
<dbReference type="PIR" id="E85809">
    <property type="entry name" value="E85809"/>
</dbReference>
<dbReference type="PIR" id="E90961">
    <property type="entry name" value="E90961"/>
</dbReference>
<dbReference type="RefSeq" id="NP_310688.1">
    <property type="nucleotide sequence ID" value="NC_002695.1"/>
</dbReference>
<dbReference type="RefSeq" id="WP_001087467.1">
    <property type="nucleotide sequence ID" value="NZ_VOAI01000028.1"/>
</dbReference>
<dbReference type="SMR" id="P0AEM8"/>
<dbReference type="STRING" id="155864.Z3012"/>
<dbReference type="GeneID" id="914052"/>
<dbReference type="GeneID" id="93776231"/>
<dbReference type="KEGG" id="ece:Z3012"/>
<dbReference type="KEGG" id="ecs:ECs_2661"/>
<dbReference type="PATRIC" id="fig|386585.9.peg.2788"/>
<dbReference type="eggNOG" id="COG1191">
    <property type="taxonomic scope" value="Bacteria"/>
</dbReference>
<dbReference type="HOGENOM" id="CLU_014793_8_1_6"/>
<dbReference type="OMA" id="LMMENRM"/>
<dbReference type="Proteomes" id="UP000000558">
    <property type="component" value="Chromosome"/>
</dbReference>
<dbReference type="Proteomes" id="UP000002519">
    <property type="component" value="Chromosome"/>
</dbReference>
<dbReference type="GO" id="GO:0005737">
    <property type="term" value="C:cytoplasm"/>
    <property type="evidence" value="ECO:0007669"/>
    <property type="project" value="UniProtKB-SubCell"/>
</dbReference>
<dbReference type="GO" id="GO:0003677">
    <property type="term" value="F:DNA binding"/>
    <property type="evidence" value="ECO:0007669"/>
    <property type="project" value="UniProtKB-UniRule"/>
</dbReference>
<dbReference type="GO" id="GO:0003899">
    <property type="term" value="F:DNA-directed RNA polymerase activity"/>
    <property type="evidence" value="ECO:0007669"/>
    <property type="project" value="InterPro"/>
</dbReference>
<dbReference type="GO" id="GO:0016987">
    <property type="term" value="F:sigma factor activity"/>
    <property type="evidence" value="ECO:0007669"/>
    <property type="project" value="UniProtKB-UniRule"/>
</dbReference>
<dbReference type="GO" id="GO:0006352">
    <property type="term" value="P:DNA-templated transcription initiation"/>
    <property type="evidence" value="ECO:0007669"/>
    <property type="project" value="UniProtKB-UniRule"/>
</dbReference>
<dbReference type="CDD" id="cd06171">
    <property type="entry name" value="Sigma70_r4"/>
    <property type="match status" value="1"/>
</dbReference>
<dbReference type="FunFam" id="1.10.1740.10:FF:000002">
    <property type="entry name" value="RNA polymerase sigma factor FliA"/>
    <property type="match status" value="1"/>
</dbReference>
<dbReference type="FunFam" id="1.20.140.160:FF:000001">
    <property type="entry name" value="RNA polymerase sigma factor FliA"/>
    <property type="match status" value="1"/>
</dbReference>
<dbReference type="Gene3D" id="1.10.1740.10">
    <property type="match status" value="1"/>
</dbReference>
<dbReference type="Gene3D" id="1.20.140.160">
    <property type="match status" value="1"/>
</dbReference>
<dbReference type="HAMAP" id="MF_00962">
    <property type="entry name" value="Sigma70_FliA"/>
    <property type="match status" value="1"/>
</dbReference>
<dbReference type="InterPro" id="IPR014284">
    <property type="entry name" value="RNA_pol_sigma-70_dom"/>
</dbReference>
<dbReference type="InterPro" id="IPR000943">
    <property type="entry name" value="RNA_pol_sigma70"/>
</dbReference>
<dbReference type="InterPro" id="IPR007627">
    <property type="entry name" value="RNA_pol_sigma70_r2"/>
</dbReference>
<dbReference type="InterPro" id="IPR007624">
    <property type="entry name" value="RNA_pol_sigma70_r3"/>
</dbReference>
<dbReference type="InterPro" id="IPR007630">
    <property type="entry name" value="RNA_pol_sigma70_r4"/>
</dbReference>
<dbReference type="InterPro" id="IPR012845">
    <property type="entry name" value="RNA_pol_sigma_FliA_WhiG"/>
</dbReference>
<dbReference type="InterPro" id="IPR013325">
    <property type="entry name" value="RNA_pol_sigma_r2"/>
</dbReference>
<dbReference type="InterPro" id="IPR013324">
    <property type="entry name" value="RNA_pol_sigma_r3/r4-like"/>
</dbReference>
<dbReference type="InterPro" id="IPR028617">
    <property type="entry name" value="Sigma70_FliA"/>
</dbReference>
<dbReference type="NCBIfam" id="TIGR02479">
    <property type="entry name" value="FliA_WhiG"/>
    <property type="match status" value="1"/>
</dbReference>
<dbReference type="NCBIfam" id="NF005413">
    <property type="entry name" value="PRK06986.1"/>
    <property type="match status" value="1"/>
</dbReference>
<dbReference type="NCBIfam" id="TIGR02937">
    <property type="entry name" value="sigma70-ECF"/>
    <property type="match status" value="1"/>
</dbReference>
<dbReference type="PANTHER" id="PTHR30385:SF7">
    <property type="entry name" value="RNA POLYMERASE SIGMA FACTOR FLIA"/>
    <property type="match status" value="1"/>
</dbReference>
<dbReference type="PANTHER" id="PTHR30385">
    <property type="entry name" value="SIGMA FACTOR F FLAGELLAR"/>
    <property type="match status" value="1"/>
</dbReference>
<dbReference type="Pfam" id="PF04542">
    <property type="entry name" value="Sigma70_r2"/>
    <property type="match status" value="1"/>
</dbReference>
<dbReference type="Pfam" id="PF04539">
    <property type="entry name" value="Sigma70_r3"/>
    <property type="match status" value="1"/>
</dbReference>
<dbReference type="Pfam" id="PF04545">
    <property type="entry name" value="Sigma70_r4"/>
    <property type="match status" value="1"/>
</dbReference>
<dbReference type="PIRSF" id="PIRSF000770">
    <property type="entry name" value="RNA_pol_sigma-SigE/K"/>
    <property type="match status" value="1"/>
</dbReference>
<dbReference type="PRINTS" id="PR00046">
    <property type="entry name" value="SIGMA70FCT"/>
</dbReference>
<dbReference type="SUPFAM" id="SSF88946">
    <property type="entry name" value="Sigma2 domain of RNA polymerase sigma factors"/>
    <property type="match status" value="1"/>
</dbReference>
<dbReference type="SUPFAM" id="SSF88659">
    <property type="entry name" value="Sigma3 and sigma4 domains of RNA polymerase sigma factors"/>
    <property type="match status" value="2"/>
</dbReference>
<dbReference type="PROSITE" id="PS00715">
    <property type="entry name" value="SIGMA70_1"/>
    <property type="match status" value="1"/>
</dbReference>
<dbReference type="PROSITE" id="PS00716">
    <property type="entry name" value="SIGMA70_2"/>
    <property type="match status" value="1"/>
</dbReference>
<reference key="1">
    <citation type="journal article" date="2001" name="Nature">
        <title>Genome sequence of enterohaemorrhagic Escherichia coli O157:H7.</title>
        <authorList>
            <person name="Perna N.T."/>
            <person name="Plunkett G. III"/>
            <person name="Burland V."/>
            <person name="Mau B."/>
            <person name="Glasner J.D."/>
            <person name="Rose D.J."/>
            <person name="Mayhew G.F."/>
            <person name="Evans P.S."/>
            <person name="Gregor J."/>
            <person name="Kirkpatrick H.A."/>
            <person name="Posfai G."/>
            <person name="Hackett J."/>
            <person name="Klink S."/>
            <person name="Boutin A."/>
            <person name="Shao Y."/>
            <person name="Miller L."/>
            <person name="Grotbeck E.J."/>
            <person name="Davis N.W."/>
            <person name="Lim A."/>
            <person name="Dimalanta E.T."/>
            <person name="Potamousis K."/>
            <person name="Apodaca J."/>
            <person name="Anantharaman T.S."/>
            <person name="Lin J."/>
            <person name="Yen G."/>
            <person name="Schwartz D.C."/>
            <person name="Welch R.A."/>
            <person name="Blattner F.R."/>
        </authorList>
    </citation>
    <scope>NUCLEOTIDE SEQUENCE [LARGE SCALE GENOMIC DNA]</scope>
    <source>
        <strain>O157:H7 / EDL933 / ATCC 700927 / EHEC</strain>
    </source>
</reference>
<reference key="2">
    <citation type="journal article" date="2001" name="DNA Res.">
        <title>Complete genome sequence of enterohemorrhagic Escherichia coli O157:H7 and genomic comparison with a laboratory strain K-12.</title>
        <authorList>
            <person name="Hayashi T."/>
            <person name="Makino K."/>
            <person name="Ohnishi M."/>
            <person name="Kurokawa K."/>
            <person name="Ishii K."/>
            <person name="Yokoyama K."/>
            <person name="Han C.-G."/>
            <person name="Ohtsubo E."/>
            <person name="Nakayama K."/>
            <person name="Murata T."/>
            <person name="Tanaka M."/>
            <person name="Tobe T."/>
            <person name="Iida T."/>
            <person name="Takami H."/>
            <person name="Honda T."/>
            <person name="Sasakawa C."/>
            <person name="Ogasawara N."/>
            <person name="Yasunaga T."/>
            <person name="Kuhara S."/>
            <person name="Shiba T."/>
            <person name="Hattori M."/>
            <person name="Shinagawa H."/>
        </authorList>
    </citation>
    <scope>NUCLEOTIDE SEQUENCE [LARGE SCALE GENOMIC DNA]</scope>
    <source>
        <strain>O157:H7 / Sakai / RIMD 0509952 / EHEC</strain>
    </source>
</reference>
<sequence length="239" mass="27521">MNSLYTAEGVMDKHSLWQRYVPLVRHEALRLQVRLPASVELDDLLQAGGIGLLNAVERYDALQGTAFTTYAVQRIRGAMLDELRSRDWVPRSVRRNAREVAQAIGQLEQELGRNATETEVAERLGIDIADYRQMLLDTNNSQLFSYDEWREEHGDSIELVTDDHQRENPLQQLLDSNLRQRVMEAIETLPEREKLVLTLYYQEELNLKEIGAVLEVGESRVSQLHSQAIKRLRTKLGKL</sequence>
<evidence type="ECO:0000255" key="1">
    <source>
        <dbReference type="HAMAP-Rule" id="MF_00962"/>
    </source>
</evidence>
<feature type="chain" id="PRO_0000093982" description="RNA polymerase sigma factor FliA">
    <location>
        <begin position="1"/>
        <end position="239"/>
    </location>
</feature>
<feature type="DNA-binding region" description="H-T-H motif" evidence="1">
    <location>
        <begin position="207"/>
        <end position="226"/>
    </location>
</feature>
<feature type="region of interest" description="Sigma-70 factor domain-2" evidence="1">
    <location>
        <begin position="16"/>
        <end position="88"/>
    </location>
</feature>
<feature type="region of interest" description="Sigma-70 factor domain-3" evidence="1">
    <location>
        <begin position="96"/>
        <end position="166"/>
    </location>
</feature>
<feature type="region of interest" description="Sigma-70 factor domain-4" evidence="1">
    <location>
        <begin position="185"/>
        <end position="233"/>
    </location>
</feature>
<feature type="short sequence motif" description="Interaction with polymerase core subunit RpoC">
    <location>
        <begin position="43"/>
        <end position="46"/>
    </location>
</feature>
<proteinExistence type="inferred from homology"/>
<name>FLIA_ECO57</name>
<keyword id="KW-0963">Cytoplasm</keyword>
<keyword id="KW-0238">DNA-binding</keyword>
<keyword id="KW-1185">Reference proteome</keyword>
<keyword id="KW-0731">Sigma factor</keyword>
<keyword id="KW-0804">Transcription</keyword>
<keyword id="KW-0805">Transcription regulation</keyword>
<gene>
    <name evidence="1" type="primary">fliA</name>
    <name type="ordered locus">Z3012</name>
    <name type="ordered locus">ECs2661</name>
</gene>
<organism>
    <name type="scientific">Escherichia coli O157:H7</name>
    <dbReference type="NCBI Taxonomy" id="83334"/>
    <lineage>
        <taxon>Bacteria</taxon>
        <taxon>Pseudomonadati</taxon>
        <taxon>Pseudomonadota</taxon>
        <taxon>Gammaproteobacteria</taxon>
        <taxon>Enterobacterales</taxon>
        <taxon>Enterobacteriaceae</taxon>
        <taxon>Escherichia</taxon>
    </lineage>
</organism>